<accession>Q71L24</accession>
<name>RR7_METGY</name>
<organism>
    <name type="scientific">Metasequoia glyptostroboides</name>
    <name type="common">Dawn redwood</name>
    <name type="synonym">Sequoia glyptostroboides</name>
    <dbReference type="NCBI Taxonomy" id="3371"/>
    <lineage>
        <taxon>Eukaryota</taxon>
        <taxon>Viridiplantae</taxon>
        <taxon>Streptophyta</taxon>
        <taxon>Embryophyta</taxon>
        <taxon>Tracheophyta</taxon>
        <taxon>Spermatophyta</taxon>
        <taxon>Pinopsida</taxon>
        <taxon>Pinidae</taxon>
        <taxon>Conifers II</taxon>
        <taxon>Cupressales</taxon>
        <taxon>Cupressaceae</taxon>
        <taxon>Metasequoia</taxon>
    </lineage>
</organism>
<geneLocation type="chloroplast"/>
<gene>
    <name type="primary">rps7</name>
</gene>
<proteinExistence type="inferred from homology"/>
<comment type="function">
    <text evidence="1">One of the primary rRNA binding proteins, it binds directly to 16S rRNA where it nucleates assembly of the head domain of the 30S subunit.</text>
</comment>
<comment type="subunit">
    <text>Part of the 30S ribosomal subunit.</text>
</comment>
<comment type="subcellular location">
    <subcellularLocation>
        <location>Plastid</location>
        <location>Chloroplast</location>
    </subcellularLocation>
</comment>
<comment type="similarity">
    <text evidence="2">Belongs to the universal ribosomal protein uS7 family.</text>
</comment>
<reference key="1">
    <citation type="journal article" date="2003" name="Mol. Phylogenet. Evol.">
        <title>Inference of higher-order relationships in the cycads from a large chloroplast data set.</title>
        <authorList>
            <person name="Rai H.S."/>
            <person name="O'Brien H.E."/>
            <person name="Reeves P.A."/>
            <person name="Olmstead R.G."/>
            <person name="Graham S.W."/>
        </authorList>
    </citation>
    <scope>NUCLEOTIDE SEQUENCE [GENOMIC DNA]</scope>
</reference>
<sequence length="155" mass="18310">MSRQSTVEKKIDKFDPIYHNRLVNMIVNRILKHGKKSLAYRIFYQSLKKIQQKTEKNPLIVLRQAIHKLTPKLIVKSRRVSGSTYQVPIEIKNKEGKILAIRWLLESSRKRSGRNMHFKLSYEIMDAAREKGNAIRKKEEIHKMAESNKAFAHYH</sequence>
<dbReference type="EMBL" id="AF469736">
    <property type="protein sequence ID" value="AAQ05280.1"/>
    <property type="molecule type" value="Genomic_DNA"/>
</dbReference>
<dbReference type="RefSeq" id="YP_009154316.1">
    <property type="nucleotide sequence ID" value="NC_027423.1"/>
</dbReference>
<dbReference type="SMR" id="Q71L24"/>
<dbReference type="GeneID" id="24707186"/>
<dbReference type="GO" id="GO:0009507">
    <property type="term" value="C:chloroplast"/>
    <property type="evidence" value="ECO:0007669"/>
    <property type="project" value="UniProtKB-SubCell"/>
</dbReference>
<dbReference type="GO" id="GO:0015935">
    <property type="term" value="C:small ribosomal subunit"/>
    <property type="evidence" value="ECO:0007669"/>
    <property type="project" value="InterPro"/>
</dbReference>
<dbReference type="GO" id="GO:0019843">
    <property type="term" value="F:rRNA binding"/>
    <property type="evidence" value="ECO:0007669"/>
    <property type="project" value="UniProtKB-UniRule"/>
</dbReference>
<dbReference type="GO" id="GO:0003735">
    <property type="term" value="F:structural constituent of ribosome"/>
    <property type="evidence" value="ECO:0007669"/>
    <property type="project" value="InterPro"/>
</dbReference>
<dbReference type="GO" id="GO:0006412">
    <property type="term" value="P:translation"/>
    <property type="evidence" value="ECO:0007669"/>
    <property type="project" value="UniProtKB-UniRule"/>
</dbReference>
<dbReference type="CDD" id="cd14871">
    <property type="entry name" value="uS7_Chloroplast"/>
    <property type="match status" value="1"/>
</dbReference>
<dbReference type="FunFam" id="1.10.455.10:FF:000001">
    <property type="entry name" value="30S ribosomal protein S7"/>
    <property type="match status" value="1"/>
</dbReference>
<dbReference type="Gene3D" id="1.10.455.10">
    <property type="entry name" value="Ribosomal protein S7 domain"/>
    <property type="match status" value="1"/>
</dbReference>
<dbReference type="HAMAP" id="MF_00480_B">
    <property type="entry name" value="Ribosomal_uS7_B"/>
    <property type="match status" value="1"/>
</dbReference>
<dbReference type="InterPro" id="IPR000235">
    <property type="entry name" value="Ribosomal_uS7"/>
</dbReference>
<dbReference type="InterPro" id="IPR005717">
    <property type="entry name" value="Ribosomal_uS7_bac/org-type"/>
</dbReference>
<dbReference type="InterPro" id="IPR020606">
    <property type="entry name" value="Ribosomal_uS7_CS"/>
</dbReference>
<dbReference type="InterPro" id="IPR023798">
    <property type="entry name" value="Ribosomal_uS7_dom"/>
</dbReference>
<dbReference type="InterPro" id="IPR036823">
    <property type="entry name" value="Ribosomal_uS7_dom_sf"/>
</dbReference>
<dbReference type="NCBIfam" id="TIGR01029">
    <property type="entry name" value="rpsG_bact"/>
    <property type="match status" value="1"/>
</dbReference>
<dbReference type="PANTHER" id="PTHR11205">
    <property type="entry name" value="RIBOSOMAL PROTEIN S7"/>
    <property type="match status" value="1"/>
</dbReference>
<dbReference type="Pfam" id="PF00177">
    <property type="entry name" value="Ribosomal_S7"/>
    <property type="match status" value="1"/>
</dbReference>
<dbReference type="PIRSF" id="PIRSF002122">
    <property type="entry name" value="RPS7p_RPS7a_RPS5e_RPS7o"/>
    <property type="match status" value="1"/>
</dbReference>
<dbReference type="SUPFAM" id="SSF47973">
    <property type="entry name" value="Ribosomal protein S7"/>
    <property type="match status" value="1"/>
</dbReference>
<dbReference type="PROSITE" id="PS00052">
    <property type="entry name" value="RIBOSOMAL_S7"/>
    <property type="match status" value="1"/>
</dbReference>
<keyword id="KW-0150">Chloroplast</keyword>
<keyword id="KW-0934">Plastid</keyword>
<keyword id="KW-0687">Ribonucleoprotein</keyword>
<keyword id="KW-0689">Ribosomal protein</keyword>
<keyword id="KW-0694">RNA-binding</keyword>
<keyword id="KW-0699">rRNA-binding</keyword>
<protein>
    <recommendedName>
        <fullName evidence="2">Small ribosomal subunit protein uS7c</fullName>
    </recommendedName>
    <alternativeName>
        <fullName>30S ribosomal protein S7, chloroplastic</fullName>
    </alternativeName>
</protein>
<feature type="chain" id="PRO_0000124475" description="Small ribosomal subunit protein uS7c">
    <location>
        <begin position="1"/>
        <end position="155"/>
    </location>
</feature>
<evidence type="ECO:0000250" key="1"/>
<evidence type="ECO:0000305" key="2"/>